<dbReference type="EMBL" id="AK092993">
    <property type="protein sequence ID" value="BAC04012.1"/>
    <property type="status" value="ALT_INIT"/>
    <property type="molecule type" value="mRNA"/>
</dbReference>
<dbReference type="EMBL" id="BX640672">
    <property type="protein sequence ID" value="CAE45804.1"/>
    <property type="molecule type" value="mRNA"/>
</dbReference>
<dbReference type="EMBL" id="AP001001">
    <property type="status" value="NOT_ANNOTATED_CDS"/>
    <property type="molecule type" value="Genomic_DNA"/>
</dbReference>
<dbReference type="EMBL" id="CH471065">
    <property type="protein sequence ID" value="EAW67073.1"/>
    <property type="molecule type" value="Genomic_DNA"/>
</dbReference>
<dbReference type="EMBL" id="BC117466">
    <property type="protein sequence ID" value="AAI17467.1"/>
    <property type="molecule type" value="mRNA"/>
</dbReference>
<dbReference type="CCDS" id="CCDS8334.1"/>
<dbReference type="RefSeq" id="NP_689646.2">
    <property type="nucleotide sequence ID" value="NM_152433.3"/>
</dbReference>
<dbReference type="RefSeq" id="NP_940841.1">
    <property type="nucleotide sequence ID" value="NM_198439.3"/>
</dbReference>
<dbReference type="RefSeq" id="XP_006718830.1">
    <property type="nucleotide sequence ID" value="XM_006718767.4"/>
</dbReference>
<dbReference type="RefSeq" id="XP_011540920.1">
    <property type="nucleotide sequence ID" value="XM_011542618.3"/>
</dbReference>
<dbReference type="RefSeq" id="XP_054223736.1">
    <property type="nucleotide sequence ID" value="XM_054367761.1"/>
</dbReference>
<dbReference type="RefSeq" id="XP_054223737.1">
    <property type="nucleotide sequence ID" value="XM_054367762.1"/>
</dbReference>
<dbReference type="SMR" id="Q8NAB2"/>
<dbReference type="BioGRID" id="126820">
    <property type="interactions" value="9"/>
</dbReference>
<dbReference type="ComplexPortal" id="CPX-8942">
    <property type="entry name" value="CRL3 E3 ubiquitin ligase complex, KBTBD3 variant"/>
</dbReference>
<dbReference type="FunCoup" id="Q8NAB2">
    <property type="interactions" value="68"/>
</dbReference>
<dbReference type="IntAct" id="Q8NAB2">
    <property type="interactions" value="1"/>
</dbReference>
<dbReference type="STRING" id="9606.ENSP00000432163"/>
<dbReference type="GlyGen" id="Q8NAB2">
    <property type="glycosylation" value="1 site, 1 O-linked glycan (1 site)"/>
</dbReference>
<dbReference type="iPTMnet" id="Q8NAB2"/>
<dbReference type="PhosphoSitePlus" id="Q8NAB2"/>
<dbReference type="BioMuta" id="KBTBD3"/>
<dbReference type="DMDM" id="34921839"/>
<dbReference type="jPOST" id="Q8NAB2"/>
<dbReference type="MassIVE" id="Q8NAB2"/>
<dbReference type="PaxDb" id="9606-ENSP00000436262"/>
<dbReference type="PeptideAtlas" id="Q8NAB2"/>
<dbReference type="ProteomicsDB" id="72667"/>
<dbReference type="Antibodypedia" id="54357">
    <property type="antibodies" value="90 antibodies from 16 providers"/>
</dbReference>
<dbReference type="DNASU" id="143879"/>
<dbReference type="Ensembl" id="ENST00000526793.5">
    <property type="protein sequence ID" value="ENSP00000436262.1"/>
    <property type="gene ID" value="ENSG00000182359.15"/>
</dbReference>
<dbReference type="Ensembl" id="ENST00000531837.2">
    <property type="protein sequence ID" value="ENSP00000432163.1"/>
    <property type="gene ID" value="ENSG00000182359.15"/>
</dbReference>
<dbReference type="GeneID" id="143879"/>
<dbReference type="KEGG" id="hsa:143879"/>
<dbReference type="MANE-Select" id="ENST00000531837.2">
    <property type="protein sequence ID" value="ENSP00000432163.1"/>
    <property type="RefSeq nucleotide sequence ID" value="NM_198439.3"/>
    <property type="RefSeq protein sequence ID" value="NP_940841.1"/>
</dbReference>
<dbReference type="UCSC" id="uc001pja.4">
    <property type="organism name" value="human"/>
</dbReference>
<dbReference type="AGR" id="HGNC:22934"/>
<dbReference type="CTD" id="143879"/>
<dbReference type="DisGeNET" id="143879"/>
<dbReference type="GeneCards" id="KBTBD3"/>
<dbReference type="HGNC" id="HGNC:22934">
    <property type="gene designation" value="KBTBD3"/>
</dbReference>
<dbReference type="HPA" id="ENSG00000182359">
    <property type="expression patterns" value="Low tissue specificity"/>
</dbReference>
<dbReference type="neXtProt" id="NX_Q8NAB2"/>
<dbReference type="OpenTargets" id="ENSG00000182359"/>
<dbReference type="PharmGKB" id="PA134920598"/>
<dbReference type="VEuPathDB" id="HostDB:ENSG00000182359"/>
<dbReference type="eggNOG" id="KOG4441">
    <property type="taxonomic scope" value="Eukaryota"/>
</dbReference>
<dbReference type="GeneTree" id="ENSGT00940000158415"/>
<dbReference type="HOGENOM" id="CLU_004253_14_6_1"/>
<dbReference type="InParanoid" id="Q8NAB2"/>
<dbReference type="OMA" id="KGKCCRK"/>
<dbReference type="OrthoDB" id="25620at2759"/>
<dbReference type="PAN-GO" id="Q8NAB2">
    <property type="GO annotations" value="0 GO annotations based on evolutionary models"/>
</dbReference>
<dbReference type="PhylomeDB" id="Q8NAB2"/>
<dbReference type="TreeFam" id="TF329218"/>
<dbReference type="PathwayCommons" id="Q8NAB2"/>
<dbReference type="SignaLink" id="Q8NAB2"/>
<dbReference type="BioGRID-ORCS" id="143879">
    <property type="hits" value="17 hits in 1187 CRISPR screens"/>
</dbReference>
<dbReference type="ChiTaRS" id="KBTBD3">
    <property type="organism name" value="human"/>
</dbReference>
<dbReference type="GenomeRNAi" id="143879"/>
<dbReference type="Pharos" id="Q8NAB2">
    <property type="development level" value="Tdark"/>
</dbReference>
<dbReference type="PRO" id="PR:Q8NAB2"/>
<dbReference type="Proteomes" id="UP000005640">
    <property type="component" value="Chromosome 11"/>
</dbReference>
<dbReference type="RNAct" id="Q8NAB2">
    <property type="molecule type" value="protein"/>
</dbReference>
<dbReference type="Bgee" id="ENSG00000182359">
    <property type="expression patterns" value="Expressed in male germ line stem cell (sensu Vertebrata) in testis and 112 other cell types or tissues"/>
</dbReference>
<dbReference type="ExpressionAtlas" id="Q8NAB2">
    <property type="expression patterns" value="baseline and differential"/>
</dbReference>
<dbReference type="GO" id="GO:0031463">
    <property type="term" value="C:Cul3-RING ubiquitin ligase complex"/>
    <property type="evidence" value="ECO:0000318"/>
    <property type="project" value="GO_Central"/>
</dbReference>
<dbReference type="GO" id="GO:0005737">
    <property type="term" value="C:cytoplasm"/>
    <property type="evidence" value="ECO:0000318"/>
    <property type="project" value="GO_Central"/>
</dbReference>
<dbReference type="GO" id="GO:1990756">
    <property type="term" value="F:ubiquitin-like ligase-substrate adaptor activity"/>
    <property type="evidence" value="ECO:0000318"/>
    <property type="project" value="GO_Central"/>
</dbReference>
<dbReference type="GO" id="GO:0043161">
    <property type="term" value="P:proteasome-mediated ubiquitin-dependent protein catabolic process"/>
    <property type="evidence" value="ECO:0000318"/>
    <property type="project" value="GO_Central"/>
</dbReference>
<dbReference type="CDD" id="cd18480">
    <property type="entry name" value="BACK_KBTBD3"/>
    <property type="match status" value="1"/>
</dbReference>
<dbReference type="CDD" id="cd18271">
    <property type="entry name" value="BTB_POZ_KBTBD3_BKLHD3"/>
    <property type="match status" value="1"/>
</dbReference>
<dbReference type="FunFam" id="1.25.40.420:FF:000001">
    <property type="entry name" value="Kelch-like family member 12"/>
    <property type="match status" value="1"/>
</dbReference>
<dbReference type="Gene3D" id="1.25.40.420">
    <property type="match status" value="1"/>
</dbReference>
<dbReference type="Gene3D" id="2.120.10.80">
    <property type="entry name" value="Kelch-type beta propeller"/>
    <property type="match status" value="1"/>
</dbReference>
<dbReference type="Gene3D" id="3.30.710.10">
    <property type="entry name" value="Potassium Channel Kv1.1, Chain A"/>
    <property type="match status" value="1"/>
</dbReference>
<dbReference type="InterPro" id="IPR011705">
    <property type="entry name" value="BACK"/>
</dbReference>
<dbReference type="InterPro" id="IPR017096">
    <property type="entry name" value="BTB-kelch_protein"/>
</dbReference>
<dbReference type="InterPro" id="IPR000210">
    <property type="entry name" value="BTB/POZ_dom"/>
</dbReference>
<dbReference type="InterPro" id="IPR030589">
    <property type="entry name" value="BTB/POZ_KBTBD3"/>
</dbReference>
<dbReference type="InterPro" id="IPR047062">
    <property type="entry name" value="KBTBD3_BACK"/>
</dbReference>
<dbReference type="InterPro" id="IPR015915">
    <property type="entry name" value="Kelch-typ_b-propeller"/>
</dbReference>
<dbReference type="InterPro" id="IPR006652">
    <property type="entry name" value="Kelch_1"/>
</dbReference>
<dbReference type="InterPro" id="IPR011333">
    <property type="entry name" value="SKP1/BTB/POZ_sf"/>
</dbReference>
<dbReference type="PANTHER" id="PTHR24412">
    <property type="entry name" value="KELCH PROTEIN"/>
    <property type="match status" value="1"/>
</dbReference>
<dbReference type="PANTHER" id="PTHR24412:SF418">
    <property type="entry name" value="KELCH REPEAT AND BTB DOMAIN-CONTAINING PROTEIN 3"/>
    <property type="match status" value="1"/>
</dbReference>
<dbReference type="Pfam" id="PF07707">
    <property type="entry name" value="BACK"/>
    <property type="match status" value="1"/>
</dbReference>
<dbReference type="Pfam" id="PF00651">
    <property type="entry name" value="BTB"/>
    <property type="match status" value="1"/>
</dbReference>
<dbReference type="Pfam" id="PF01344">
    <property type="entry name" value="Kelch_1"/>
    <property type="match status" value="2"/>
</dbReference>
<dbReference type="PIRSF" id="PIRSF037037">
    <property type="entry name" value="Kelch-like_protein_gigaxonin"/>
    <property type="match status" value="1"/>
</dbReference>
<dbReference type="SMART" id="SM00875">
    <property type="entry name" value="BACK"/>
    <property type="match status" value="1"/>
</dbReference>
<dbReference type="SMART" id="SM00225">
    <property type="entry name" value="BTB"/>
    <property type="match status" value="1"/>
</dbReference>
<dbReference type="SMART" id="SM00612">
    <property type="entry name" value="Kelch"/>
    <property type="match status" value="3"/>
</dbReference>
<dbReference type="SUPFAM" id="SSF117281">
    <property type="entry name" value="Kelch motif"/>
    <property type="match status" value="1"/>
</dbReference>
<dbReference type="SUPFAM" id="SSF54695">
    <property type="entry name" value="POZ domain"/>
    <property type="match status" value="1"/>
</dbReference>
<dbReference type="PROSITE" id="PS50097">
    <property type="entry name" value="BTB"/>
    <property type="match status" value="1"/>
</dbReference>
<feature type="chain" id="PRO_0000119078" description="Kelch repeat and BTB domain-containing protein 3">
    <location>
        <begin position="1"/>
        <end position="612"/>
    </location>
</feature>
<feature type="domain" description="BTB" evidence="2">
    <location>
        <begin position="52"/>
        <end position="119"/>
    </location>
</feature>
<feature type="domain" description="BACK" evidence="1">
    <location>
        <begin position="154"/>
        <end position="254"/>
    </location>
</feature>
<feature type="repeat" description="Kelch 1" evidence="1">
    <location>
        <begin position="295"/>
        <end position="341"/>
    </location>
</feature>
<feature type="repeat" description="Kelch 2" evidence="1">
    <location>
        <begin position="343"/>
        <end position="403"/>
    </location>
</feature>
<feature type="repeat" description="Kelch 3" evidence="1">
    <location>
        <begin position="404"/>
        <end position="454"/>
    </location>
</feature>
<feature type="repeat" description="Kelch 4" evidence="1">
    <location>
        <begin position="456"/>
        <end position="506"/>
    </location>
</feature>
<feature type="repeat" description="Kelch 5" evidence="1">
    <location>
        <begin position="552"/>
        <end position="599"/>
    </location>
</feature>
<feature type="sequence variant" id="VAR_056124" description="In dbSNP:rs35762821.">
    <original>M</original>
    <variation>V</variation>
    <location>
        <position position="193"/>
    </location>
</feature>
<feature type="sequence conflict" description="In Ref. 1; BAC04012." evidence="3" ref="1">
    <original>M</original>
    <variation>K</variation>
    <location>
        <position position="1"/>
    </location>
</feature>
<feature type="sequence conflict" description="In Ref. 1; BAC04012." evidence="3" ref="1">
    <original>N</original>
    <variation>S</variation>
    <location>
        <position position="27"/>
    </location>
</feature>
<name>KBTB3_HUMAN</name>
<comment type="caution">
    <text evidence="3">It is uncertain whether Met-1 or Met-5 is the initiator.</text>
</comment>
<comment type="sequence caution" evidence="3">
    <conflict type="erroneous initiation">
        <sequence resource="EMBL-CDS" id="BAC04012"/>
    </conflict>
    <text>Truncated N-terminus.</text>
</comment>
<evidence type="ECO:0000255" key="1"/>
<evidence type="ECO:0000255" key="2">
    <source>
        <dbReference type="PROSITE-ProRule" id="PRU00037"/>
    </source>
</evidence>
<evidence type="ECO:0000305" key="3"/>
<evidence type="ECO:0000312" key="4">
    <source>
        <dbReference type="HGNC" id="HGNC:22934"/>
    </source>
</evidence>
<keyword id="KW-0880">Kelch repeat</keyword>
<keyword id="KW-1267">Proteomics identification</keyword>
<keyword id="KW-1185">Reference proteome</keyword>
<keyword id="KW-0677">Repeat</keyword>
<reference key="1">
    <citation type="journal article" date="2004" name="Nat. Genet.">
        <title>Complete sequencing and characterization of 21,243 full-length human cDNAs.</title>
        <authorList>
            <person name="Ota T."/>
            <person name="Suzuki Y."/>
            <person name="Nishikawa T."/>
            <person name="Otsuki T."/>
            <person name="Sugiyama T."/>
            <person name="Irie R."/>
            <person name="Wakamatsu A."/>
            <person name="Hayashi K."/>
            <person name="Sato H."/>
            <person name="Nagai K."/>
            <person name="Kimura K."/>
            <person name="Makita H."/>
            <person name="Sekine M."/>
            <person name="Obayashi M."/>
            <person name="Nishi T."/>
            <person name="Shibahara T."/>
            <person name="Tanaka T."/>
            <person name="Ishii S."/>
            <person name="Yamamoto J."/>
            <person name="Saito K."/>
            <person name="Kawai Y."/>
            <person name="Isono Y."/>
            <person name="Nakamura Y."/>
            <person name="Nagahari K."/>
            <person name="Murakami K."/>
            <person name="Yasuda T."/>
            <person name="Iwayanagi T."/>
            <person name="Wagatsuma M."/>
            <person name="Shiratori A."/>
            <person name="Sudo H."/>
            <person name="Hosoiri T."/>
            <person name="Kaku Y."/>
            <person name="Kodaira H."/>
            <person name="Kondo H."/>
            <person name="Sugawara M."/>
            <person name="Takahashi M."/>
            <person name="Kanda K."/>
            <person name="Yokoi T."/>
            <person name="Furuya T."/>
            <person name="Kikkawa E."/>
            <person name="Omura Y."/>
            <person name="Abe K."/>
            <person name="Kamihara K."/>
            <person name="Katsuta N."/>
            <person name="Sato K."/>
            <person name="Tanikawa M."/>
            <person name="Yamazaki M."/>
            <person name="Ninomiya K."/>
            <person name="Ishibashi T."/>
            <person name="Yamashita H."/>
            <person name="Murakawa K."/>
            <person name="Fujimori K."/>
            <person name="Tanai H."/>
            <person name="Kimata M."/>
            <person name="Watanabe M."/>
            <person name="Hiraoka S."/>
            <person name="Chiba Y."/>
            <person name="Ishida S."/>
            <person name="Ono Y."/>
            <person name="Takiguchi S."/>
            <person name="Watanabe S."/>
            <person name="Yosida M."/>
            <person name="Hotuta T."/>
            <person name="Kusano J."/>
            <person name="Kanehori K."/>
            <person name="Takahashi-Fujii A."/>
            <person name="Hara H."/>
            <person name="Tanase T.-O."/>
            <person name="Nomura Y."/>
            <person name="Togiya S."/>
            <person name="Komai F."/>
            <person name="Hara R."/>
            <person name="Takeuchi K."/>
            <person name="Arita M."/>
            <person name="Imose N."/>
            <person name="Musashino K."/>
            <person name="Yuuki H."/>
            <person name="Oshima A."/>
            <person name="Sasaki N."/>
            <person name="Aotsuka S."/>
            <person name="Yoshikawa Y."/>
            <person name="Matsunawa H."/>
            <person name="Ichihara T."/>
            <person name="Shiohata N."/>
            <person name="Sano S."/>
            <person name="Moriya S."/>
            <person name="Momiyama H."/>
            <person name="Satoh N."/>
            <person name="Takami S."/>
            <person name="Terashima Y."/>
            <person name="Suzuki O."/>
            <person name="Nakagawa S."/>
            <person name="Senoh A."/>
            <person name="Mizoguchi H."/>
            <person name="Goto Y."/>
            <person name="Shimizu F."/>
            <person name="Wakebe H."/>
            <person name="Hishigaki H."/>
            <person name="Watanabe T."/>
            <person name="Sugiyama A."/>
            <person name="Takemoto M."/>
            <person name="Kawakami B."/>
            <person name="Yamazaki M."/>
            <person name="Watanabe K."/>
            <person name="Kumagai A."/>
            <person name="Itakura S."/>
            <person name="Fukuzumi Y."/>
            <person name="Fujimori Y."/>
            <person name="Komiyama M."/>
            <person name="Tashiro H."/>
            <person name="Tanigami A."/>
            <person name="Fujiwara T."/>
            <person name="Ono T."/>
            <person name="Yamada K."/>
            <person name="Fujii Y."/>
            <person name="Ozaki K."/>
            <person name="Hirao M."/>
            <person name="Ohmori Y."/>
            <person name="Kawabata A."/>
            <person name="Hikiji T."/>
            <person name="Kobatake N."/>
            <person name="Inagaki H."/>
            <person name="Ikema Y."/>
            <person name="Okamoto S."/>
            <person name="Okitani R."/>
            <person name="Kawakami T."/>
            <person name="Noguchi S."/>
            <person name="Itoh T."/>
            <person name="Shigeta K."/>
            <person name="Senba T."/>
            <person name="Matsumura K."/>
            <person name="Nakajima Y."/>
            <person name="Mizuno T."/>
            <person name="Morinaga M."/>
            <person name="Sasaki M."/>
            <person name="Togashi T."/>
            <person name="Oyama M."/>
            <person name="Hata H."/>
            <person name="Watanabe M."/>
            <person name="Komatsu T."/>
            <person name="Mizushima-Sugano J."/>
            <person name="Satoh T."/>
            <person name="Shirai Y."/>
            <person name="Takahashi Y."/>
            <person name="Nakagawa K."/>
            <person name="Okumura K."/>
            <person name="Nagase T."/>
            <person name="Nomura N."/>
            <person name="Kikuchi H."/>
            <person name="Masuho Y."/>
            <person name="Yamashita R."/>
            <person name="Nakai K."/>
            <person name="Yada T."/>
            <person name="Nakamura Y."/>
            <person name="Ohara O."/>
            <person name="Isogai T."/>
            <person name="Sugano S."/>
        </authorList>
    </citation>
    <scope>NUCLEOTIDE SEQUENCE [LARGE SCALE MRNA]</scope>
    <source>
        <tissue>Brain</tissue>
        <tissue>Spleen</tissue>
    </source>
</reference>
<reference key="2">
    <citation type="journal article" date="2007" name="BMC Genomics">
        <title>The full-ORF clone resource of the German cDNA consortium.</title>
        <authorList>
            <person name="Bechtel S."/>
            <person name="Rosenfelder H."/>
            <person name="Duda A."/>
            <person name="Schmidt C.P."/>
            <person name="Ernst U."/>
            <person name="Wellenreuther R."/>
            <person name="Mehrle A."/>
            <person name="Schuster C."/>
            <person name="Bahr A."/>
            <person name="Bloecker H."/>
            <person name="Heubner D."/>
            <person name="Hoerlein A."/>
            <person name="Michel G."/>
            <person name="Wedler H."/>
            <person name="Koehrer K."/>
            <person name="Ottenwaelder B."/>
            <person name="Poustka A."/>
            <person name="Wiemann S."/>
            <person name="Schupp I."/>
        </authorList>
    </citation>
    <scope>NUCLEOTIDE SEQUENCE [LARGE SCALE MRNA]</scope>
    <source>
        <tissue>Uterus</tissue>
    </source>
</reference>
<reference key="3">
    <citation type="journal article" date="2006" name="Nature">
        <title>Human chromosome 11 DNA sequence and analysis including novel gene identification.</title>
        <authorList>
            <person name="Taylor T.D."/>
            <person name="Noguchi H."/>
            <person name="Totoki Y."/>
            <person name="Toyoda A."/>
            <person name="Kuroki Y."/>
            <person name="Dewar K."/>
            <person name="Lloyd C."/>
            <person name="Itoh T."/>
            <person name="Takeda T."/>
            <person name="Kim D.-W."/>
            <person name="She X."/>
            <person name="Barlow K.F."/>
            <person name="Bloom T."/>
            <person name="Bruford E."/>
            <person name="Chang J.L."/>
            <person name="Cuomo C.A."/>
            <person name="Eichler E."/>
            <person name="FitzGerald M.G."/>
            <person name="Jaffe D.B."/>
            <person name="LaButti K."/>
            <person name="Nicol R."/>
            <person name="Park H.-S."/>
            <person name="Seaman C."/>
            <person name="Sougnez C."/>
            <person name="Yang X."/>
            <person name="Zimmer A.R."/>
            <person name="Zody M.C."/>
            <person name="Birren B.W."/>
            <person name="Nusbaum C."/>
            <person name="Fujiyama A."/>
            <person name="Hattori M."/>
            <person name="Rogers J."/>
            <person name="Lander E.S."/>
            <person name="Sakaki Y."/>
        </authorList>
    </citation>
    <scope>NUCLEOTIDE SEQUENCE [LARGE SCALE GENOMIC DNA]</scope>
</reference>
<reference key="4">
    <citation type="submission" date="2005-07" db="EMBL/GenBank/DDBJ databases">
        <authorList>
            <person name="Mural R.J."/>
            <person name="Istrail S."/>
            <person name="Sutton G.G."/>
            <person name="Florea L."/>
            <person name="Halpern A.L."/>
            <person name="Mobarry C.M."/>
            <person name="Lippert R."/>
            <person name="Walenz B."/>
            <person name="Shatkay H."/>
            <person name="Dew I."/>
            <person name="Miller J.R."/>
            <person name="Flanigan M.J."/>
            <person name="Edwards N.J."/>
            <person name="Bolanos R."/>
            <person name="Fasulo D."/>
            <person name="Halldorsson B.V."/>
            <person name="Hannenhalli S."/>
            <person name="Turner R."/>
            <person name="Yooseph S."/>
            <person name="Lu F."/>
            <person name="Nusskern D.R."/>
            <person name="Shue B.C."/>
            <person name="Zheng X.H."/>
            <person name="Zhong F."/>
            <person name="Delcher A.L."/>
            <person name="Huson D.H."/>
            <person name="Kravitz S.A."/>
            <person name="Mouchard L."/>
            <person name="Reinert K."/>
            <person name="Remington K.A."/>
            <person name="Clark A.G."/>
            <person name="Waterman M.S."/>
            <person name="Eichler E.E."/>
            <person name="Adams M.D."/>
            <person name="Hunkapiller M.W."/>
            <person name="Myers E.W."/>
            <person name="Venter J.C."/>
        </authorList>
    </citation>
    <scope>NUCLEOTIDE SEQUENCE [LARGE SCALE GENOMIC DNA]</scope>
</reference>
<reference key="5">
    <citation type="journal article" date="2004" name="Genome Res.">
        <title>The status, quality, and expansion of the NIH full-length cDNA project: the Mammalian Gene Collection (MGC).</title>
        <authorList>
            <consortium name="The MGC Project Team"/>
        </authorList>
    </citation>
    <scope>NUCLEOTIDE SEQUENCE [LARGE SCALE MRNA]</scope>
    <source>
        <tissue>Brain</tissue>
    </source>
</reference>
<gene>
    <name evidence="4" type="primary">KBTBD3</name>
    <name evidence="4" type="synonym">BKLHD3</name>
</gene>
<sequence>MELAMDNSYAFNQRSTCNGIPSEKKNNFLVSEDHGQKILSVLQNFREQNVFYDFKIIMKDEIIPCHRCVLAACSDFFRAMFEVNMKERDDGSVTITNLSSKAVKAFLDYAYTGKTKITDDNVEMFFQLSSFLQVSFLSKACSDFLIKSINLVNCLQLLSISDSYGSTSLFDHALHFVQHHFSLLFKSSDFLEMNFGVLQKCLESDELNVPEEEMVLKVVLSWTKHNLESRQKYLPHLIEKVRLHQLSEETLQDCLFNEESLLKSTNCFDIIMDAIKCVQGSGGLFPDARPSTTEKYIFIHKTEENGENQYTFCYNIKSDSWKILPQSHLIDLPGSSLSSYGEKIFLTGGCKGKCCRTVRLHIAESYHDATDQTWCYCPVKNDFFLVSTMKTPRTMHTSVMALDRLFVIGGKTRGSRDIKSLLDVESYNPLSKEWISVSPLPRGIYYPEASTCQNVIYVLGSEVEITDAFNPSLDCFFKYNATTDQWSELVAEFGQFFHATLIKAVPVNCTLYICDLSTYKVYSFCPDTCVWKGEGSFECAGFNAGAIGIEDKIYILGGDYAPDEITDEVQVYHSNRSEWEEVSPMPRALTEFYCQVIQFNKYRDPWFSNLCA</sequence>
<accession>Q8NAB2</accession>
<accession>Q6N066</accession>
<accession>Q86X38</accession>
<accession>Q96NK5</accession>
<organism>
    <name type="scientific">Homo sapiens</name>
    <name type="common">Human</name>
    <dbReference type="NCBI Taxonomy" id="9606"/>
    <lineage>
        <taxon>Eukaryota</taxon>
        <taxon>Metazoa</taxon>
        <taxon>Chordata</taxon>
        <taxon>Craniata</taxon>
        <taxon>Vertebrata</taxon>
        <taxon>Euteleostomi</taxon>
        <taxon>Mammalia</taxon>
        <taxon>Eutheria</taxon>
        <taxon>Euarchontoglires</taxon>
        <taxon>Primates</taxon>
        <taxon>Haplorrhini</taxon>
        <taxon>Catarrhini</taxon>
        <taxon>Hominidae</taxon>
        <taxon>Homo</taxon>
    </lineage>
</organism>
<protein>
    <recommendedName>
        <fullName evidence="3">Kelch repeat and BTB domain-containing protein 3</fullName>
    </recommendedName>
    <alternativeName>
        <fullName evidence="4">BTB and kelch domain-containing protein 3</fullName>
    </alternativeName>
</protein>
<proteinExistence type="evidence at protein level"/>